<organism>
    <name type="scientific">Rickettsia peacockii (strain Rustic)</name>
    <dbReference type="NCBI Taxonomy" id="562019"/>
    <lineage>
        <taxon>Bacteria</taxon>
        <taxon>Pseudomonadati</taxon>
        <taxon>Pseudomonadota</taxon>
        <taxon>Alphaproteobacteria</taxon>
        <taxon>Rickettsiales</taxon>
        <taxon>Rickettsiaceae</taxon>
        <taxon>Rickettsieae</taxon>
        <taxon>Rickettsia</taxon>
        <taxon>spotted fever group</taxon>
    </lineage>
</organism>
<evidence type="ECO:0000255" key="1">
    <source>
        <dbReference type="HAMAP-Rule" id="MF_01343"/>
    </source>
</evidence>
<evidence type="ECO:0000305" key="2"/>
<comment type="function">
    <text evidence="1">One of the primary rRNA binding proteins, it binds directly to 16S rRNA where it helps nucleate assembly of the platform of the 30S subunit by binding and bridging several RNA helices of the 16S rRNA.</text>
</comment>
<comment type="function">
    <text evidence="1">Forms an intersubunit bridge (bridge B4) with the 23S rRNA of the 50S subunit in the ribosome.</text>
</comment>
<comment type="subunit">
    <text evidence="1">Part of the 30S ribosomal subunit. Forms a bridge to the 50S subunit in the 70S ribosome, contacting the 23S rRNA.</text>
</comment>
<comment type="similarity">
    <text evidence="1">Belongs to the universal ribosomal protein uS15 family.</text>
</comment>
<proteinExistence type="inferred from homology"/>
<dbReference type="EMBL" id="CP001227">
    <property type="protein sequence ID" value="ACR47055.1"/>
    <property type="molecule type" value="Genomic_DNA"/>
</dbReference>
<dbReference type="RefSeq" id="WP_012736361.1">
    <property type="nucleotide sequence ID" value="NC_012730.1"/>
</dbReference>
<dbReference type="SMR" id="C4K0F3"/>
<dbReference type="KEGG" id="rpk:RPR_00275"/>
<dbReference type="HOGENOM" id="CLU_148518_0_0_5"/>
<dbReference type="Proteomes" id="UP000005015">
    <property type="component" value="Chromosome"/>
</dbReference>
<dbReference type="GO" id="GO:0022627">
    <property type="term" value="C:cytosolic small ribosomal subunit"/>
    <property type="evidence" value="ECO:0007669"/>
    <property type="project" value="TreeGrafter"/>
</dbReference>
<dbReference type="GO" id="GO:0019843">
    <property type="term" value="F:rRNA binding"/>
    <property type="evidence" value="ECO:0007669"/>
    <property type="project" value="UniProtKB-UniRule"/>
</dbReference>
<dbReference type="GO" id="GO:0003735">
    <property type="term" value="F:structural constituent of ribosome"/>
    <property type="evidence" value="ECO:0007669"/>
    <property type="project" value="InterPro"/>
</dbReference>
<dbReference type="GO" id="GO:0006412">
    <property type="term" value="P:translation"/>
    <property type="evidence" value="ECO:0007669"/>
    <property type="project" value="UniProtKB-UniRule"/>
</dbReference>
<dbReference type="CDD" id="cd00353">
    <property type="entry name" value="Ribosomal_S15p_S13e"/>
    <property type="match status" value="1"/>
</dbReference>
<dbReference type="FunFam" id="1.10.287.10:FF:000002">
    <property type="entry name" value="30S ribosomal protein S15"/>
    <property type="match status" value="1"/>
</dbReference>
<dbReference type="Gene3D" id="6.10.250.3130">
    <property type="match status" value="1"/>
</dbReference>
<dbReference type="Gene3D" id="1.10.287.10">
    <property type="entry name" value="S15/NS1, RNA-binding"/>
    <property type="match status" value="1"/>
</dbReference>
<dbReference type="HAMAP" id="MF_01343_B">
    <property type="entry name" value="Ribosomal_uS15_B"/>
    <property type="match status" value="1"/>
</dbReference>
<dbReference type="InterPro" id="IPR000589">
    <property type="entry name" value="Ribosomal_uS15"/>
</dbReference>
<dbReference type="InterPro" id="IPR005290">
    <property type="entry name" value="Ribosomal_uS15_bac-type"/>
</dbReference>
<dbReference type="InterPro" id="IPR009068">
    <property type="entry name" value="uS15_NS1_RNA-bd_sf"/>
</dbReference>
<dbReference type="NCBIfam" id="TIGR00952">
    <property type="entry name" value="S15_bact"/>
    <property type="match status" value="1"/>
</dbReference>
<dbReference type="PANTHER" id="PTHR23321">
    <property type="entry name" value="RIBOSOMAL PROTEIN S15, BACTERIAL AND ORGANELLAR"/>
    <property type="match status" value="1"/>
</dbReference>
<dbReference type="PANTHER" id="PTHR23321:SF26">
    <property type="entry name" value="SMALL RIBOSOMAL SUBUNIT PROTEIN US15M"/>
    <property type="match status" value="1"/>
</dbReference>
<dbReference type="Pfam" id="PF00312">
    <property type="entry name" value="Ribosomal_S15"/>
    <property type="match status" value="1"/>
</dbReference>
<dbReference type="SMART" id="SM01387">
    <property type="entry name" value="Ribosomal_S15"/>
    <property type="match status" value="1"/>
</dbReference>
<dbReference type="SUPFAM" id="SSF47060">
    <property type="entry name" value="S15/NS1 RNA-binding domain"/>
    <property type="match status" value="1"/>
</dbReference>
<dbReference type="PROSITE" id="PS00362">
    <property type="entry name" value="RIBOSOMAL_S15"/>
    <property type="match status" value="1"/>
</dbReference>
<protein>
    <recommendedName>
        <fullName evidence="1">Small ribosomal subunit protein uS15</fullName>
    </recommendedName>
    <alternativeName>
        <fullName evidence="2">30S ribosomal protein S15</fullName>
    </alternativeName>
</protein>
<sequence>MSITTERKQKLIKEYAITENDTGSSAVQCAILTERINNLTEHFKSNHKDHTSRRGLLILVGRRRRLLNYIKKNNVSKYLDLISKLGIRKIK</sequence>
<name>RS15_RICPU</name>
<gene>
    <name evidence="1" type="primary">rpsO</name>
    <name type="ordered locus">RPR_00275</name>
</gene>
<reference key="1">
    <citation type="journal article" date="2009" name="PLoS ONE">
        <title>Genome sequence of the endosymbiont Rickettsia peacockii and comparison with virulent Rickettsia rickettsii: identification of virulence factors.</title>
        <authorList>
            <person name="Felsheim R.F."/>
            <person name="Kurtti T.J."/>
            <person name="Munderloh U.G."/>
        </authorList>
    </citation>
    <scope>NUCLEOTIDE SEQUENCE [LARGE SCALE GENOMIC DNA]</scope>
    <source>
        <strain>Rustic</strain>
    </source>
</reference>
<accession>C4K0F3</accession>
<feature type="chain" id="PRO_1000214769" description="Small ribosomal subunit protein uS15">
    <location>
        <begin position="1"/>
        <end position="91"/>
    </location>
</feature>
<keyword id="KW-0687">Ribonucleoprotein</keyword>
<keyword id="KW-0689">Ribosomal protein</keyword>
<keyword id="KW-0694">RNA-binding</keyword>
<keyword id="KW-0699">rRNA-binding</keyword>